<protein>
    <recommendedName>
        <fullName evidence="1">Ribosomal RNA small subunit methyltransferase H</fullName>
        <ecNumber evidence="1">2.1.1.199</ecNumber>
    </recommendedName>
    <alternativeName>
        <fullName evidence="1">16S rRNA m(4)C1402 methyltransferase</fullName>
    </alternativeName>
    <alternativeName>
        <fullName evidence="1">rRNA (cytosine-N(4)-)-methyltransferase RsmH</fullName>
    </alternativeName>
</protein>
<gene>
    <name evidence="1" type="primary">rsmH</name>
    <name type="synonym">mraW</name>
    <name type="ordered locus">TWT_220</name>
</gene>
<feature type="chain" id="PRO_0000108739" description="Ribosomal RNA small subunit methyltransferase H">
    <location>
        <begin position="1"/>
        <end position="317"/>
    </location>
</feature>
<feature type="binding site" evidence="1">
    <location>
        <begin position="34"/>
        <end position="36"/>
    </location>
    <ligand>
        <name>S-adenosyl-L-methionine</name>
        <dbReference type="ChEBI" id="CHEBI:59789"/>
    </ligand>
</feature>
<feature type="binding site" evidence="1">
    <location>
        <position position="53"/>
    </location>
    <ligand>
        <name>S-adenosyl-L-methionine</name>
        <dbReference type="ChEBI" id="CHEBI:59789"/>
    </ligand>
</feature>
<feature type="binding site" evidence="1">
    <location>
        <position position="80"/>
    </location>
    <ligand>
        <name>S-adenosyl-L-methionine</name>
        <dbReference type="ChEBI" id="CHEBI:59789"/>
    </ligand>
</feature>
<feature type="binding site" evidence="1">
    <location>
        <position position="98"/>
    </location>
    <ligand>
        <name>S-adenosyl-L-methionine</name>
        <dbReference type="ChEBI" id="CHEBI:59789"/>
    </ligand>
</feature>
<feature type="binding site" evidence="1">
    <location>
        <position position="105"/>
    </location>
    <ligand>
        <name>S-adenosyl-L-methionine</name>
        <dbReference type="ChEBI" id="CHEBI:59789"/>
    </ligand>
</feature>
<name>RSMH_TROWT</name>
<evidence type="ECO:0000255" key="1">
    <source>
        <dbReference type="HAMAP-Rule" id="MF_01007"/>
    </source>
</evidence>
<accession>Q83GN7</accession>
<sequence length="317" mass="35636">MNGHLPVMLGEVCQLIEPVLGIGDVFIDATLGAGGHSEAILMSSQGALLYGIDRDAYALALARKRLSGFADRCKFVHDTFDKFDKYLSNLHPKVFLFDLGMSSMQIDNPDRGFSYMKSGPLDMRMNESDKITAKEILNGYSETALIRIFRDYGQERYAKRIARQICKARSVSELVTTCQVSQLIRDVCPPHIRKGHPAKRVFQALRIEVNSELLFLRTALEKALDLLQVGGRIVVLSYHSLEDRIVKHLFRSVSVSQLPKGFYINKDPEYKLIGKDLKNPKETEIANNPRASSAHLRAVERVHSHSQAEAQIVEPRA</sequence>
<comment type="function">
    <text evidence="1">Specifically methylates the N4 position of cytidine in position 1402 (C1402) of 16S rRNA.</text>
</comment>
<comment type="catalytic activity">
    <reaction evidence="1">
        <text>cytidine(1402) in 16S rRNA + S-adenosyl-L-methionine = N(4)-methylcytidine(1402) in 16S rRNA + S-adenosyl-L-homocysteine + H(+)</text>
        <dbReference type="Rhea" id="RHEA:42928"/>
        <dbReference type="Rhea" id="RHEA-COMP:10286"/>
        <dbReference type="Rhea" id="RHEA-COMP:10287"/>
        <dbReference type="ChEBI" id="CHEBI:15378"/>
        <dbReference type="ChEBI" id="CHEBI:57856"/>
        <dbReference type="ChEBI" id="CHEBI:59789"/>
        <dbReference type="ChEBI" id="CHEBI:74506"/>
        <dbReference type="ChEBI" id="CHEBI:82748"/>
        <dbReference type="EC" id="2.1.1.199"/>
    </reaction>
</comment>
<comment type="subcellular location">
    <subcellularLocation>
        <location evidence="1">Cytoplasm</location>
    </subcellularLocation>
</comment>
<comment type="similarity">
    <text evidence="1">Belongs to the methyltransferase superfamily. RsmH family.</text>
</comment>
<proteinExistence type="inferred from homology"/>
<organism>
    <name type="scientific">Tropheryma whipplei (strain Twist)</name>
    <name type="common">Whipple's bacillus</name>
    <dbReference type="NCBI Taxonomy" id="203267"/>
    <lineage>
        <taxon>Bacteria</taxon>
        <taxon>Bacillati</taxon>
        <taxon>Actinomycetota</taxon>
        <taxon>Actinomycetes</taxon>
        <taxon>Micrococcales</taxon>
        <taxon>Tropherymataceae</taxon>
        <taxon>Tropheryma</taxon>
    </lineage>
</organism>
<reference key="1">
    <citation type="journal article" date="2003" name="Genome Res.">
        <title>Tropheryma whipplei twist: a human pathogenic Actinobacteria with a reduced genome.</title>
        <authorList>
            <person name="Raoult D."/>
            <person name="Ogata H."/>
            <person name="Audic S."/>
            <person name="Robert C."/>
            <person name="Suhre K."/>
            <person name="Drancourt M."/>
            <person name="Claverie J.-M."/>
        </authorList>
    </citation>
    <scope>NUCLEOTIDE SEQUENCE [LARGE SCALE GENOMIC DNA]</scope>
    <source>
        <strain>Twist</strain>
    </source>
</reference>
<dbReference type="EC" id="2.1.1.199" evidence="1"/>
<dbReference type="EMBL" id="AE014184">
    <property type="protein sequence ID" value="AAO44317.1"/>
    <property type="molecule type" value="Genomic_DNA"/>
</dbReference>
<dbReference type="RefSeq" id="WP_011096496.1">
    <property type="nucleotide sequence ID" value="NC_004572.3"/>
</dbReference>
<dbReference type="SMR" id="Q83GN7"/>
<dbReference type="STRING" id="203267.TWT_220"/>
<dbReference type="GeneID" id="67388329"/>
<dbReference type="KEGG" id="twh:TWT_220"/>
<dbReference type="eggNOG" id="COG0275">
    <property type="taxonomic scope" value="Bacteria"/>
</dbReference>
<dbReference type="HOGENOM" id="CLU_038422_2_0_11"/>
<dbReference type="OrthoDB" id="9806637at2"/>
<dbReference type="Proteomes" id="UP000002200">
    <property type="component" value="Chromosome"/>
</dbReference>
<dbReference type="GO" id="GO:0005737">
    <property type="term" value="C:cytoplasm"/>
    <property type="evidence" value="ECO:0007669"/>
    <property type="project" value="UniProtKB-SubCell"/>
</dbReference>
<dbReference type="GO" id="GO:0071424">
    <property type="term" value="F:rRNA (cytosine-N4-)-methyltransferase activity"/>
    <property type="evidence" value="ECO:0007669"/>
    <property type="project" value="UniProtKB-UniRule"/>
</dbReference>
<dbReference type="GO" id="GO:0070475">
    <property type="term" value="P:rRNA base methylation"/>
    <property type="evidence" value="ECO:0007669"/>
    <property type="project" value="UniProtKB-UniRule"/>
</dbReference>
<dbReference type="Gene3D" id="1.10.150.170">
    <property type="entry name" value="Putative methyltransferase TM0872, insert domain"/>
    <property type="match status" value="1"/>
</dbReference>
<dbReference type="Gene3D" id="3.40.50.150">
    <property type="entry name" value="Vaccinia Virus protein VP39"/>
    <property type="match status" value="1"/>
</dbReference>
<dbReference type="HAMAP" id="MF_01007">
    <property type="entry name" value="16SrRNA_methyltr_H"/>
    <property type="match status" value="1"/>
</dbReference>
<dbReference type="InterPro" id="IPR002903">
    <property type="entry name" value="RsmH"/>
</dbReference>
<dbReference type="InterPro" id="IPR023397">
    <property type="entry name" value="SAM-dep_MeTrfase_MraW_recog"/>
</dbReference>
<dbReference type="InterPro" id="IPR029063">
    <property type="entry name" value="SAM-dependent_MTases_sf"/>
</dbReference>
<dbReference type="NCBIfam" id="TIGR00006">
    <property type="entry name" value="16S rRNA (cytosine(1402)-N(4))-methyltransferase RsmH"/>
    <property type="match status" value="1"/>
</dbReference>
<dbReference type="PANTHER" id="PTHR11265:SF0">
    <property type="entry name" value="12S RRNA N4-METHYLCYTIDINE METHYLTRANSFERASE"/>
    <property type="match status" value="1"/>
</dbReference>
<dbReference type="PANTHER" id="PTHR11265">
    <property type="entry name" value="S-ADENOSYL-METHYLTRANSFERASE MRAW"/>
    <property type="match status" value="1"/>
</dbReference>
<dbReference type="Pfam" id="PF01795">
    <property type="entry name" value="Methyltransf_5"/>
    <property type="match status" value="1"/>
</dbReference>
<dbReference type="PIRSF" id="PIRSF004486">
    <property type="entry name" value="MraW"/>
    <property type="match status" value="1"/>
</dbReference>
<dbReference type="SUPFAM" id="SSF81799">
    <property type="entry name" value="Putative methyltransferase TM0872, insert domain"/>
    <property type="match status" value="1"/>
</dbReference>
<dbReference type="SUPFAM" id="SSF53335">
    <property type="entry name" value="S-adenosyl-L-methionine-dependent methyltransferases"/>
    <property type="match status" value="1"/>
</dbReference>
<keyword id="KW-0963">Cytoplasm</keyword>
<keyword id="KW-0489">Methyltransferase</keyword>
<keyword id="KW-1185">Reference proteome</keyword>
<keyword id="KW-0698">rRNA processing</keyword>
<keyword id="KW-0949">S-adenosyl-L-methionine</keyword>
<keyword id="KW-0808">Transferase</keyword>